<comment type="function">
    <text>Nuclear hormone receptor that can act as a repressor or activator of transcription. High affinity receptor for thyroid hormones, including triiodothyronine and thyroxine.</text>
</comment>
<comment type="subunit">
    <text evidence="1">Probably interacts with SFPQ.</text>
</comment>
<comment type="subcellular location">
    <subcellularLocation>
        <location>Nucleus</location>
    </subcellularLocation>
</comment>
<comment type="domain">
    <text>Composed of three domains: a modulating N-terminal domain, a DNA-binding domain and a C-terminal ligand-binding domain.</text>
</comment>
<comment type="similarity">
    <text evidence="8">Belongs to the nuclear hormone receptor family. NR1 subfamily.</text>
</comment>
<accession>O42450</accession>
<keyword id="KW-0238">DNA-binding</keyword>
<keyword id="KW-0479">Metal-binding</keyword>
<keyword id="KW-0539">Nucleus</keyword>
<keyword id="KW-0597">Phosphoprotein</keyword>
<keyword id="KW-0675">Receptor</keyword>
<keyword id="KW-0804">Transcription</keyword>
<keyword id="KW-0805">Transcription regulation</keyword>
<keyword id="KW-0862">Zinc</keyword>
<keyword id="KW-0863">Zinc-finger</keyword>
<organism>
    <name type="scientific">Pygoscelis adeliae</name>
    <name type="common">Adelie penguin</name>
    <dbReference type="NCBI Taxonomy" id="9238"/>
    <lineage>
        <taxon>Eukaryota</taxon>
        <taxon>Metazoa</taxon>
        <taxon>Chordata</taxon>
        <taxon>Craniata</taxon>
        <taxon>Vertebrata</taxon>
        <taxon>Euteleostomi</taxon>
        <taxon>Archelosauria</taxon>
        <taxon>Archosauria</taxon>
        <taxon>Dinosauria</taxon>
        <taxon>Saurischia</taxon>
        <taxon>Theropoda</taxon>
        <taxon>Coelurosauria</taxon>
        <taxon>Aves</taxon>
        <taxon>Neognathae</taxon>
        <taxon>Neoaves</taxon>
        <taxon>Aequornithes</taxon>
        <taxon>Sphenisciformes</taxon>
        <taxon>Spheniscidae</taxon>
        <taxon>Pygoscelis</taxon>
    </lineage>
</organism>
<reference key="1">
    <citation type="submission" date="1997-10" db="EMBL/GenBank/DDBJ databases">
        <title>cDNA encoding alpha thyroid hormone receptor in Pygoscelis adeliae.</title>
        <authorList>
            <person name="Vera N."/>
            <person name="Lachuer J."/>
            <person name="Duchamp C."/>
            <person name="Moulin C."/>
            <person name="Cohen-Adad F."/>
            <person name="Barre H."/>
        </authorList>
    </citation>
    <scope>NUCLEOTIDE SEQUENCE [MRNA]</scope>
    <source>
        <tissue>Liver</tissue>
    </source>
</reference>
<protein>
    <recommendedName>
        <fullName>Thyroid hormone receptor alpha</fullName>
    </recommendedName>
    <alternativeName>
        <fullName>Nuclear receptor subfamily 1 group A member 1</fullName>
    </alternativeName>
</protein>
<name>THA_PYGAD</name>
<proteinExistence type="evidence at transcript level"/>
<sequence length="402" mass="46137">MEQKPSTLDPLSEPEDTRWLDGKRKRKSSQCLVKSSMSGYIPSYLDKDEQCVVCGDKATGYHYRCITCAGCKGFFRRTIQKNLHPTYSCKYDGCCVIDKITRNQCQLCRFKKCISVGMAMDLVLYDSKRVAKRKLIEENRERRRKEEMIKSLQHRPNPSAEEWELIHVVTEAHRSTNAQGSHWKQKRKFLPEDIGQSPMASMPDGDKVDLEAFSEFTKIITPAITRVVDFAKKLPMFSELPCEDQIILLKGCCMEIMSLRAAVRYDPEGGTLTLSGEMAVKREQLKNGGLRVVSDAIFDLGKSLSAFNLDDTEVALLQAVLLMSSDRTGLICVEKIEKCQETYLLAFEHYINYRKHNIPHFWPKLLMKVTDLRMIRACHASRFLHMKVECPTELFPPLFLEV</sequence>
<feature type="chain" id="PRO_0000053432" description="Thyroid hormone receptor alpha">
    <location>
        <begin position="1"/>
        <end position="402" status="greater than"/>
    </location>
</feature>
<feature type="domain" description="NR LBD" evidence="6">
    <location>
        <begin position="161"/>
        <end position="402" status="greater than"/>
    </location>
</feature>
<feature type="DNA-binding region" description="Nuclear receptor" evidence="5">
    <location>
        <begin position="51"/>
        <end position="125"/>
    </location>
</feature>
<feature type="zinc finger region" description="NR C4-type" evidence="5">
    <location>
        <begin position="51"/>
        <end position="71"/>
    </location>
</feature>
<feature type="zinc finger region" description="NR C4-type" evidence="5">
    <location>
        <begin position="89"/>
        <end position="113"/>
    </location>
</feature>
<feature type="region of interest" description="Modulating">
    <location>
        <begin position="1"/>
        <end position="50"/>
    </location>
</feature>
<feature type="region of interest" description="Disordered" evidence="7">
    <location>
        <begin position="1"/>
        <end position="22"/>
    </location>
</feature>
<feature type="binding site" evidence="4">
    <location>
        <position position="51"/>
    </location>
    <ligand>
        <name>Zn(2+)</name>
        <dbReference type="ChEBI" id="CHEBI:29105"/>
        <label>1</label>
    </ligand>
</feature>
<feature type="binding site" evidence="4">
    <location>
        <position position="54"/>
    </location>
    <ligand>
        <name>Zn(2+)</name>
        <dbReference type="ChEBI" id="CHEBI:29105"/>
        <label>1</label>
    </ligand>
</feature>
<feature type="binding site" evidence="4">
    <location>
        <position position="68"/>
    </location>
    <ligand>
        <name>Zn(2+)</name>
        <dbReference type="ChEBI" id="CHEBI:29105"/>
        <label>1</label>
    </ligand>
</feature>
<feature type="binding site" evidence="4">
    <location>
        <position position="71"/>
    </location>
    <ligand>
        <name>Zn(2+)</name>
        <dbReference type="ChEBI" id="CHEBI:29105"/>
        <label>1</label>
    </ligand>
</feature>
<feature type="binding site" evidence="4">
    <location>
        <position position="89"/>
    </location>
    <ligand>
        <name>Zn(2+)</name>
        <dbReference type="ChEBI" id="CHEBI:29105"/>
        <label>2</label>
    </ligand>
</feature>
<feature type="binding site" evidence="4">
    <location>
        <position position="95"/>
    </location>
    <ligand>
        <name>Zn(2+)</name>
        <dbReference type="ChEBI" id="CHEBI:29105"/>
        <label>2</label>
    </ligand>
</feature>
<feature type="binding site" evidence="4">
    <location>
        <position position="105"/>
    </location>
    <ligand>
        <name>Zn(2+)</name>
        <dbReference type="ChEBI" id="CHEBI:29105"/>
        <label>2</label>
    </ligand>
</feature>
<feature type="binding site" evidence="4">
    <location>
        <position position="108"/>
    </location>
    <ligand>
        <name>Zn(2+)</name>
        <dbReference type="ChEBI" id="CHEBI:29105"/>
        <label>2</label>
    </ligand>
</feature>
<feature type="binding site" evidence="3">
    <location>
        <position position="226"/>
    </location>
    <ligand>
        <name>3,3',5-triiodo-L-thyronine</name>
        <dbReference type="ChEBI" id="CHEBI:533015"/>
    </ligand>
</feature>
<feature type="binding site" evidence="3">
    <location>
        <position position="275"/>
    </location>
    <ligand>
        <name>3,3',5-triiodo-L-thyronine</name>
        <dbReference type="ChEBI" id="CHEBI:533015"/>
    </ligand>
</feature>
<feature type="modified residue" description="Phosphoserine; by CK2" evidence="2">
    <location>
        <position position="12"/>
    </location>
</feature>
<feature type="modified residue" description="Phosphoserine" evidence="2">
    <location>
        <position position="28"/>
    </location>
</feature>
<feature type="non-terminal residue">
    <location>
        <position position="402"/>
    </location>
</feature>
<gene>
    <name type="primary">THRA</name>
    <name type="synonym">NR1A1</name>
</gene>
<evidence type="ECO:0000250" key="1"/>
<evidence type="ECO:0000250" key="2">
    <source>
        <dbReference type="UniProtKB" id="P04625"/>
    </source>
</evidence>
<evidence type="ECO:0000250" key="3">
    <source>
        <dbReference type="UniProtKB" id="P10827"/>
    </source>
</evidence>
<evidence type="ECO:0000250" key="4">
    <source>
        <dbReference type="UniProtKB" id="P10828"/>
    </source>
</evidence>
<evidence type="ECO:0000255" key="5">
    <source>
        <dbReference type="PROSITE-ProRule" id="PRU00407"/>
    </source>
</evidence>
<evidence type="ECO:0000255" key="6">
    <source>
        <dbReference type="PROSITE-ProRule" id="PRU01189"/>
    </source>
</evidence>
<evidence type="ECO:0000256" key="7">
    <source>
        <dbReference type="SAM" id="MobiDB-lite"/>
    </source>
</evidence>
<evidence type="ECO:0000305" key="8"/>
<dbReference type="EMBL" id="AJ002300">
    <property type="protein sequence ID" value="CAA05310.1"/>
    <property type="molecule type" value="mRNA"/>
</dbReference>
<dbReference type="SMR" id="O42450"/>
<dbReference type="GO" id="GO:0090575">
    <property type="term" value="C:RNA polymerase II transcription regulator complex"/>
    <property type="evidence" value="ECO:0007669"/>
    <property type="project" value="TreeGrafter"/>
</dbReference>
<dbReference type="GO" id="GO:0004879">
    <property type="term" value="F:nuclear receptor activity"/>
    <property type="evidence" value="ECO:0000250"/>
    <property type="project" value="UniProtKB"/>
</dbReference>
<dbReference type="GO" id="GO:0000978">
    <property type="term" value="F:RNA polymerase II cis-regulatory region sequence-specific DNA binding"/>
    <property type="evidence" value="ECO:0007669"/>
    <property type="project" value="TreeGrafter"/>
</dbReference>
<dbReference type="GO" id="GO:0070324">
    <property type="term" value="F:thyroid hormone binding"/>
    <property type="evidence" value="ECO:0000250"/>
    <property type="project" value="UniProtKB"/>
</dbReference>
<dbReference type="GO" id="GO:0008270">
    <property type="term" value="F:zinc ion binding"/>
    <property type="evidence" value="ECO:0007669"/>
    <property type="project" value="UniProtKB-KW"/>
</dbReference>
<dbReference type="GO" id="GO:0030154">
    <property type="term" value="P:cell differentiation"/>
    <property type="evidence" value="ECO:0007669"/>
    <property type="project" value="TreeGrafter"/>
</dbReference>
<dbReference type="GO" id="GO:0000122">
    <property type="term" value="P:negative regulation of transcription by RNA polymerase II"/>
    <property type="evidence" value="ECO:0007669"/>
    <property type="project" value="TreeGrafter"/>
</dbReference>
<dbReference type="GO" id="GO:0045944">
    <property type="term" value="P:positive regulation of transcription by RNA polymerase II"/>
    <property type="evidence" value="ECO:0007669"/>
    <property type="project" value="TreeGrafter"/>
</dbReference>
<dbReference type="GO" id="GO:0048384">
    <property type="term" value="P:retinoic acid receptor signaling pathway"/>
    <property type="evidence" value="ECO:0007669"/>
    <property type="project" value="TreeGrafter"/>
</dbReference>
<dbReference type="GO" id="GO:0002154">
    <property type="term" value="P:thyroid hormone receptor signaling pathway"/>
    <property type="evidence" value="ECO:0007669"/>
    <property type="project" value="TreeGrafter"/>
</dbReference>
<dbReference type="CDD" id="cd06961">
    <property type="entry name" value="NR_DBD_TR"/>
    <property type="match status" value="1"/>
</dbReference>
<dbReference type="CDD" id="cd06935">
    <property type="entry name" value="NR_LBD_TR"/>
    <property type="match status" value="1"/>
</dbReference>
<dbReference type="FunFam" id="1.10.565.10:FF:000006">
    <property type="entry name" value="Thyroid hormone receptor beta 2"/>
    <property type="match status" value="1"/>
</dbReference>
<dbReference type="FunFam" id="3.30.50.10:FF:000011">
    <property type="entry name" value="Thyroid hormone receptor beta isoform"/>
    <property type="match status" value="1"/>
</dbReference>
<dbReference type="Gene3D" id="3.30.50.10">
    <property type="entry name" value="Erythroid Transcription Factor GATA-1, subunit A"/>
    <property type="match status" value="1"/>
</dbReference>
<dbReference type="Gene3D" id="1.10.565.10">
    <property type="entry name" value="Retinoid X Receptor"/>
    <property type="match status" value="1"/>
</dbReference>
<dbReference type="InterPro" id="IPR035500">
    <property type="entry name" value="NHR-like_dom_sf"/>
</dbReference>
<dbReference type="InterPro" id="IPR000536">
    <property type="entry name" value="Nucl_hrmn_rcpt_lig-bd"/>
</dbReference>
<dbReference type="InterPro" id="IPR050234">
    <property type="entry name" value="Nuclear_hormone_rcpt_NR1"/>
</dbReference>
<dbReference type="InterPro" id="IPR001723">
    <property type="entry name" value="Nuclear_hrmn_rcpt"/>
</dbReference>
<dbReference type="InterPro" id="IPR001728">
    <property type="entry name" value="ThyrH_rcpt"/>
</dbReference>
<dbReference type="InterPro" id="IPR001628">
    <property type="entry name" value="Znf_hrmn_rcpt"/>
</dbReference>
<dbReference type="InterPro" id="IPR013088">
    <property type="entry name" value="Znf_NHR/GATA"/>
</dbReference>
<dbReference type="PANTHER" id="PTHR24082">
    <property type="entry name" value="NUCLEAR HORMONE RECEPTOR"/>
    <property type="match status" value="1"/>
</dbReference>
<dbReference type="PANTHER" id="PTHR24082:SF42">
    <property type="entry name" value="THYROID HORMONE RECEPTOR ALPHA"/>
    <property type="match status" value="1"/>
</dbReference>
<dbReference type="Pfam" id="PF00104">
    <property type="entry name" value="Hormone_recep"/>
    <property type="match status" value="1"/>
</dbReference>
<dbReference type="Pfam" id="PF00105">
    <property type="entry name" value="zf-C4"/>
    <property type="match status" value="1"/>
</dbReference>
<dbReference type="PRINTS" id="PR00398">
    <property type="entry name" value="STRDHORMONER"/>
</dbReference>
<dbReference type="PRINTS" id="PR00047">
    <property type="entry name" value="STROIDFINGER"/>
</dbReference>
<dbReference type="PRINTS" id="PR00546">
    <property type="entry name" value="THYROIDHORMR"/>
</dbReference>
<dbReference type="SMART" id="SM00430">
    <property type="entry name" value="HOLI"/>
    <property type="match status" value="1"/>
</dbReference>
<dbReference type="SMART" id="SM00399">
    <property type="entry name" value="ZnF_C4"/>
    <property type="match status" value="1"/>
</dbReference>
<dbReference type="SUPFAM" id="SSF57716">
    <property type="entry name" value="Glucocorticoid receptor-like (DNA-binding domain)"/>
    <property type="match status" value="1"/>
</dbReference>
<dbReference type="SUPFAM" id="SSF48508">
    <property type="entry name" value="Nuclear receptor ligand-binding domain"/>
    <property type="match status" value="1"/>
</dbReference>
<dbReference type="PROSITE" id="PS51843">
    <property type="entry name" value="NR_LBD"/>
    <property type="match status" value="1"/>
</dbReference>
<dbReference type="PROSITE" id="PS00031">
    <property type="entry name" value="NUCLEAR_REC_DBD_1"/>
    <property type="match status" value="1"/>
</dbReference>
<dbReference type="PROSITE" id="PS51030">
    <property type="entry name" value="NUCLEAR_REC_DBD_2"/>
    <property type="match status" value="1"/>
</dbReference>